<protein>
    <recommendedName>
        <fullName evidence="1">DNA-directed RNA polymerase subunit alpha</fullName>
        <shortName evidence="1">RNAP subunit alpha</shortName>
        <ecNumber evidence="1">2.7.7.6</ecNumber>
    </recommendedName>
    <alternativeName>
        <fullName evidence="1">RNA polymerase subunit alpha</fullName>
    </alternativeName>
    <alternativeName>
        <fullName evidence="1">Transcriptase subunit alpha</fullName>
    </alternativeName>
</protein>
<evidence type="ECO:0000255" key="1">
    <source>
        <dbReference type="HAMAP-Rule" id="MF_00059"/>
    </source>
</evidence>
<keyword id="KW-0240">DNA-directed RNA polymerase</keyword>
<keyword id="KW-0548">Nucleotidyltransferase</keyword>
<keyword id="KW-0804">Transcription</keyword>
<keyword id="KW-0808">Transferase</keyword>
<comment type="function">
    <text evidence="1">DNA-dependent RNA polymerase catalyzes the transcription of DNA into RNA using the four ribonucleoside triphosphates as substrates.</text>
</comment>
<comment type="catalytic activity">
    <reaction evidence="1">
        <text>RNA(n) + a ribonucleoside 5'-triphosphate = RNA(n+1) + diphosphate</text>
        <dbReference type="Rhea" id="RHEA:21248"/>
        <dbReference type="Rhea" id="RHEA-COMP:14527"/>
        <dbReference type="Rhea" id="RHEA-COMP:17342"/>
        <dbReference type="ChEBI" id="CHEBI:33019"/>
        <dbReference type="ChEBI" id="CHEBI:61557"/>
        <dbReference type="ChEBI" id="CHEBI:140395"/>
        <dbReference type="EC" id="2.7.7.6"/>
    </reaction>
</comment>
<comment type="subunit">
    <text evidence="1">Homodimer. The RNAP catalytic core consists of 2 alpha, 1 beta, 1 beta' and 1 omega subunit. When a sigma factor is associated with the core the holoenzyme is formed, which can initiate transcription.</text>
</comment>
<comment type="domain">
    <text evidence="1">The N-terminal domain is essential for RNAP assembly and basal transcription, whereas the C-terminal domain is involved in interaction with transcriptional regulators and with upstream promoter elements.</text>
</comment>
<comment type="similarity">
    <text evidence="1">Belongs to the RNA polymerase alpha chain family.</text>
</comment>
<accession>B4SLH5</accession>
<feature type="chain" id="PRO_1000091969" description="DNA-directed RNA polymerase subunit alpha">
    <location>
        <begin position="1"/>
        <end position="332"/>
    </location>
</feature>
<feature type="region of interest" description="Alpha N-terminal domain (alpha-NTD)" evidence="1">
    <location>
        <begin position="1"/>
        <end position="234"/>
    </location>
</feature>
<feature type="region of interest" description="Alpha C-terminal domain (alpha-CTD)" evidence="1">
    <location>
        <begin position="248"/>
        <end position="332"/>
    </location>
</feature>
<reference key="1">
    <citation type="submission" date="2008-06" db="EMBL/GenBank/DDBJ databases">
        <title>Complete sequence of Stenotrophomonas maltophilia R551-3.</title>
        <authorList>
            <consortium name="US DOE Joint Genome Institute"/>
            <person name="Lucas S."/>
            <person name="Copeland A."/>
            <person name="Lapidus A."/>
            <person name="Glavina del Rio T."/>
            <person name="Dalin E."/>
            <person name="Tice H."/>
            <person name="Pitluck S."/>
            <person name="Chain P."/>
            <person name="Malfatti S."/>
            <person name="Shin M."/>
            <person name="Vergez L."/>
            <person name="Lang D."/>
            <person name="Schmutz J."/>
            <person name="Larimer F."/>
            <person name="Land M."/>
            <person name="Hauser L."/>
            <person name="Kyrpides N."/>
            <person name="Mikhailova N."/>
            <person name="Taghavi S."/>
            <person name="Monchy S."/>
            <person name="Newman L."/>
            <person name="Vangronsveld J."/>
            <person name="van der Lelie D."/>
            <person name="Richardson P."/>
        </authorList>
    </citation>
    <scope>NUCLEOTIDE SEQUENCE [LARGE SCALE GENOMIC DNA]</scope>
    <source>
        <strain>R551-3</strain>
    </source>
</reference>
<name>RPOA_STRM5</name>
<proteinExistence type="inferred from homology"/>
<dbReference type="EC" id="2.7.7.6" evidence="1"/>
<dbReference type="EMBL" id="CP001111">
    <property type="protein sequence ID" value="ACF50485.1"/>
    <property type="molecule type" value="Genomic_DNA"/>
</dbReference>
<dbReference type="RefSeq" id="WP_004145453.1">
    <property type="nucleotide sequence ID" value="NC_011071.1"/>
</dbReference>
<dbReference type="SMR" id="B4SLH5"/>
<dbReference type="STRING" id="391008.Smal_0780"/>
<dbReference type="KEGG" id="smt:Smal_0780"/>
<dbReference type="eggNOG" id="COG0202">
    <property type="taxonomic scope" value="Bacteria"/>
</dbReference>
<dbReference type="HOGENOM" id="CLU_053084_0_0_6"/>
<dbReference type="OrthoDB" id="9805706at2"/>
<dbReference type="Proteomes" id="UP000001867">
    <property type="component" value="Chromosome"/>
</dbReference>
<dbReference type="GO" id="GO:0005737">
    <property type="term" value="C:cytoplasm"/>
    <property type="evidence" value="ECO:0007669"/>
    <property type="project" value="UniProtKB-ARBA"/>
</dbReference>
<dbReference type="GO" id="GO:0000428">
    <property type="term" value="C:DNA-directed RNA polymerase complex"/>
    <property type="evidence" value="ECO:0007669"/>
    <property type="project" value="UniProtKB-KW"/>
</dbReference>
<dbReference type="GO" id="GO:0003677">
    <property type="term" value="F:DNA binding"/>
    <property type="evidence" value="ECO:0007669"/>
    <property type="project" value="UniProtKB-UniRule"/>
</dbReference>
<dbReference type="GO" id="GO:0003899">
    <property type="term" value="F:DNA-directed RNA polymerase activity"/>
    <property type="evidence" value="ECO:0007669"/>
    <property type="project" value="UniProtKB-UniRule"/>
</dbReference>
<dbReference type="GO" id="GO:0046983">
    <property type="term" value="F:protein dimerization activity"/>
    <property type="evidence" value="ECO:0007669"/>
    <property type="project" value="InterPro"/>
</dbReference>
<dbReference type="GO" id="GO:0006351">
    <property type="term" value="P:DNA-templated transcription"/>
    <property type="evidence" value="ECO:0007669"/>
    <property type="project" value="UniProtKB-UniRule"/>
</dbReference>
<dbReference type="CDD" id="cd06928">
    <property type="entry name" value="RNAP_alpha_NTD"/>
    <property type="match status" value="1"/>
</dbReference>
<dbReference type="FunFam" id="1.10.150.20:FF:000001">
    <property type="entry name" value="DNA-directed RNA polymerase subunit alpha"/>
    <property type="match status" value="1"/>
</dbReference>
<dbReference type="FunFam" id="2.170.120.12:FF:000001">
    <property type="entry name" value="DNA-directed RNA polymerase subunit alpha"/>
    <property type="match status" value="1"/>
</dbReference>
<dbReference type="Gene3D" id="1.10.150.20">
    <property type="entry name" value="5' to 3' exonuclease, C-terminal subdomain"/>
    <property type="match status" value="1"/>
</dbReference>
<dbReference type="Gene3D" id="2.170.120.12">
    <property type="entry name" value="DNA-directed RNA polymerase, insert domain"/>
    <property type="match status" value="1"/>
</dbReference>
<dbReference type="Gene3D" id="3.30.1360.10">
    <property type="entry name" value="RNA polymerase, RBP11-like subunit"/>
    <property type="match status" value="1"/>
</dbReference>
<dbReference type="HAMAP" id="MF_00059">
    <property type="entry name" value="RNApol_bact_RpoA"/>
    <property type="match status" value="1"/>
</dbReference>
<dbReference type="InterPro" id="IPR011262">
    <property type="entry name" value="DNA-dir_RNA_pol_insert"/>
</dbReference>
<dbReference type="InterPro" id="IPR011263">
    <property type="entry name" value="DNA-dir_RNA_pol_RpoA/D/Rpb3"/>
</dbReference>
<dbReference type="InterPro" id="IPR011773">
    <property type="entry name" value="DNA-dir_RpoA"/>
</dbReference>
<dbReference type="InterPro" id="IPR036603">
    <property type="entry name" value="RBP11-like"/>
</dbReference>
<dbReference type="InterPro" id="IPR011260">
    <property type="entry name" value="RNAP_asu_C"/>
</dbReference>
<dbReference type="InterPro" id="IPR036643">
    <property type="entry name" value="RNApol_insert_sf"/>
</dbReference>
<dbReference type="NCBIfam" id="NF003513">
    <property type="entry name" value="PRK05182.1-2"/>
    <property type="match status" value="1"/>
</dbReference>
<dbReference type="NCBIfam" id="NF003519">
    <property type="entry name" value="PRK05182.2-5"/>
    <property type="match status" value="1"/>
</dbReference>
<dbReference type="NCBIfam" id="TIGR02027">
    <property type="entry name" value="rpoA"/>
    <property type="match status" value="1"/>
</dbReference>
<dbReference type="Pfam" id="PF01000">
    <property type="entry name" value="RNA_pol_A_bac"/>
    <property type="match status" value="1"/>
</dbReference>
<dbReference type="Pfam" id="PF03118">
    <property type="entry name" value="RNA_pol_A_CTD"/>
    <property type="match status" value="1"/>
</dbReference>
<dbReference type="Pfam" id="PF01193">
    <property type="entry name" value="RNA_pol_L"/>
    <property type="match status" value="1"/>
</dbReference>
<dbReference type="SMART" id="SM00662">
    <property type="entry name" value="RPOLD"/>
    <property type="match status" value="1"/>
</dbReference>
<dbReference type="SUPFAM" id="SSF47789">
    <property type="entry name" value="C-terminal domain of RNA polymerase alpha subunit"/>
    <property type="match status" value="1"/>
</dbReference>
<dbReference type="SUPFAM" id="SSF56553">
    <property type="entry name" value="Insert subdomain of RNA polymerase alpha subunit"/>
    <property type="match status" value="1"/>
</dbReference>
<dbReference type="SUPFAM" id="SSF55257">
    <property type="entry name" value="RBP11-like subunits of RNA polymerase"/>
    <property type="match status" value="1"/>
</dbReference>
<organism>
    <name type="scientific">Stenotrophomonas maltophilia (strain R551-3)</name>
    <dbReference type="NCBI Taxonomy" id="391008"/>
    <lineage>
        <taxon>Bacteria</taxon>
        <taxon>Pseudomonadati</taxon>
        <taxon>Pseudomonadota</taxon>
        <taxon>Gammaproteobacteria</taxon>
        <taxon>Lysobacterales</taxon>
        <taxon>Lysobacteraceae</taxon>
        <taxon>Stenotrophomonas</taxon>
        <taxon>Stenotrophomonas maltophilia group</taxon>
    </lineage>
</organism>
<sequence length="332" mass="36301">MTVTANQVLRPRGPQIERLTDTRAKVVIEPLERGYGHTLGNALRRVLLSSIPGFAITEVEIDGVLHEYTTVEGLQEDVLEVLLNLKDVAIRMHSGDSATLSLSKQGPGVVTAADIKVDHNVEILNGDHVICHLTKDTAVNMRLKIERGFGYQPAAARRRPDEETRAIGRLVLDASFSPVRRVAYAVEAARVEQRTDLDKLVIDIETNGTIDAEEAVRTAADILSDQLSVFGDFTHRDRGAAKPANNGVDPVLLRPIDDLELTVRSANCLKAESIYYIGDLIQKTEVELLKTPNLGKKSLTEIKEVLAQRGLSLGMKLENWPPAGVASHGMLG</sequence>
<gene>
    <name evidence="1" type="primary">rpoA</name>
    <name type="ordered locus">Smal_0780</name>
</gene>